<keyword id="KW-0903">Direct protein sequencing</keyword>
<keyword id="KW-0378">Hydrolase</keyword>
<keyword id="KW-0479">Metal-binding</keyword>
<keyword id="KW-0482">Metalloprotease</keyword>
<keyword id="KW-0645">Protease</keyword>
<keyword id="KW-0964">Secreted</keyword>
<keyword id="KW-0732">Signal</keyword>
<keyword id="KW-0862">Zinc</keyword>
<keyword id="KW-0865">Zymogen</keyword>
<evidence type="ECO:0000255" key="1">
    <source>
        <dbReference type="PROSITE-ProRule" id="PRU10095"/>
    </source>
</evidence>
<evidence type="ECO:0000269" key="2">
    <source>
    </source>
</evidence>
<evidence type="ECO:0000303" key="3">
    <source>
    </source>
</evidence>
<evidence type="ECO:0000305" key="4"/>
<evidence type="ECO:0000305" key="5">
    <source>
    </source>
</evidence>
<reference key="1">
    <citation type="journal article" date="1994" name="Mol. Gen. Genet.">
        <title>Genetic and biochemical properties of an extracellular neutral metalloprotease from Staphylococcus hyicus subsp. hyicus.</title>
        <authorList>
            <person name="Ayora S."/>
            <person name="Goetz F."/>
        </authorList>
    </citation>
    <scope>NUCLEOTIDE SEQUENCE [GENOMIC DNA]</scope>
    <scope>PROTEIN SEQUENCE OF 93-115</scope>
    <scope>FUNCTION</scope>
    <scope>CATALYTIC ACTIVITY</scope>
    <scope>SUBSTRATE SPECIFICITY</scope>
    <scope>BIOPHYSICOCHEMICAL PROPERTIES</scope>
    <scope>COFACTOR</scope>
    <scope>ACTIVITY REGULATION</scope>
    <scope>SUBCELLULAR LOCATION</scope>
    <source>
        <strain>ATCC 11249 / DSM 20459 / NCTC 10350 / 1</strain>
    </source>
</reference>
<proteinExistence type="evidence at protein level"/>
<dbReference type="EC" id="3.4.24.-" evidence="2"/>
<dbReference type="EMBL" id="X73315">
    <property type="protein sequence ID" value="CAA51745.1"/>
    <property type="molecule type" value="Genomic_DNA"/>
</dbReference>
<dbReference type="PIR" id="S42581">
    <property type="entry name" value="S42581"/>
</dbReference>
<dbReference type="RefSeq" id="WP_039646018.1">
    <property type="nucleotide sequence ID" value="NZ_CP008747.1"/>
</dbReference>
<dbReference type="SMR" id="Q08002"/>
<dbReference type="MEROPS" id="M30.001"/>
<dbReference type="GeneID" id="41073385"/>
<dbReference type="GO" id="GO:0005576">
    <property type="term" value="C:extracellular region"/>
    <property type="evidence" value="ECO:0000314"/>
    <property type="project" value="UniProtKB"/>
</dbReference>
<dbReference type="GO" id="GO:0004222">
    <property type="term" value="F:metalloendopeptidase activity"/>
    <property type="evidence" value="ECO:0000314"/>
    <property type="project" value="UniProtKB"/>
</dbReference>
<dbReference type="GO" id="GO:0008270">
    <property type="term" value="F:zinc ion binding"/>
    <property type="evidence" value="ECO:0000314"/>
    <property type="project" value="UniProtKB"/>
</dbReference>
<dbReference type="GO" id="GO:0006508">
    <property type="term" value="P:proteolysis"/>
    <property type="evidence" value="ECO:0007669"/>
    <property type="project" value="UniProtKB-KW"/>
</dbReference>
<dbReference type="InterPro" id="IPR019501">
    <property type="entry name" value="Peptidase_M30_hyicolysin"/>
</dbReference>
<dbReference type="Pfam" id="PF10460">
    <property type="entry name" value="Peptidase_M30"/>
    <property type="match status" value="1"/>
</dbReference>
<dbReference type="PROSITE" id="PS00142">
    <property type="entry name" value="ZINC_PROTEASE"/>
    <property type="match status" value="1"/>
</dbReference>
<feature type="signal peptide" evidence="5">
    <location>
        <begin position="1"/>
        <end position="26"/>
    </location>
</feature>
<feature type="propeptide" id="PRO_0000029231" evidence="2">
    <location>
        <begin position="27"/>
        <end position="101"/>
    </location>
</feature>
<feature type="chain" id="PRO_0000029232" description="Neutral metalloprotease ShpI">
    <location>
        <begin position="102"/>
        <end position="438"/>
    </location>
</feature>
<feature type="active site" evidence="1">
    <location>
        <position position="243"/>
    </location>
</feature>
<feature type="binding site" evidence="1 5">
    <location>
        <position position="242"/>
    </location>
    <ligand>
        <name>Zn(2+)</name>
        <dbReference type="ChEBI" id="CHEBI:29105"/>
        <note>catalytic</note>
    </ligand>
</feature>
<feature type="binding site" evidence="1 5">
    <location>
        <position position="246"/>
    </location>
    <ligand>
        <name>Zn(2+)</name>
        <dbReference type="ChEBI" id="CHEBI:29105"/>
        <note>catalytic</note>
    </ligand>
</feature>
<feature type="binding site" evidence="1 5">
    <location>
        <position position="269"/>
    </location>
    <ligand>
        <name>Zn(2+)</name>
        <dbReference type="ChEBI" id="CHEBI:29105"/>
        <note>catalytic</note>
    </ligand>
</feature>
<gene>
    <name evidence="3" type="primary">shpI</name>
</gene>
<organism>
    <name type="scientific">Staphylococcus hyicus</name>
    <dbReference type="NCBI Taxonomy" id="1284"/>
    <lineage>
        <taxon>Bacteria</taxon>
        <taxon>Bacillati</taxon>
        <taxon>Bacillota</taxon>
        <taxon>Bacilli</taxon>
        <taxon>Bacillales</taxon>
        <taxon>Staphylococcaceae</taxon>
        <taxon>Staphylococcus</taxon>
    </lineage>
</organism>
<protein>
    <recommendedName>
        <fullName evidence="3">Neutral metalloprotease ShpI</fullName>
        <ecNumber evidence="2">3.4.24.-</ecNumber>
    </recommendedName>
</protein>
<name>SHPI_STAHY</name>
<comment type="function">
    <text evidence="2">Protease that has a low substrate specificity. Catalyzes the hydrolysis of glucagon, melittin and oxidized beta-insulin at various positions in vitro. Is not able to cleave elastin or the synthetic substrates FAGLA (a substrate for neutral proteinases) and FALGPA (a substrate for collagenase).</text>
</comment>
<comment type="cofactor">
    <cofactor evidence="2">
        <name>Zn(2+)</name>
        <dbReference type="ChEBI" id="CHEBI:29105"/>
    </cofactor>
    <text evidence="4">Binds 1 zinc ion per subunit.</text>
</comment>
<comment type="activity regulation">
    <text evidence="2">Inhibited by metal- and zinc-specific inhibitors, such as EDTA and 1,10-phenanthroline in vitro. Is resistant to all inhibitors of serine, cysteine and aspartic proteases.</text>
</comment>
<comment type="biophysicochemical properties">
    <phDependence>
        <text evidence="2">Optimum pH is 7.4-8.5.</text>
    </phDependence>
    <temperatureDependence>
        <text evidence="2">Optimum temperature is 55 degrees Celsius. Unstable at temperatures above 45 degrees Celsius.</text>
    </temperatureDependence>
</comment>
<comment type="subcellular location">
    <subcellularLocation>
        <location evidence="2">Secreted</location>
    </subcellularLocation>
</comment>
<comment type="PTM">
    <text>Several different N-terminal ends may be produced, the favored N-terminus is position 102.</text>
</comment>
<comment type="similarity">
    <text evidence="4">Belongs to the peptidase M30 family.</text>
</comment>
<accession>Q08002</accession>
<accession>Q09166</accession>
<sequence>MINKKKLVTSLVTSSLLATFTLGSFADAHTYIINNEDINKNAQESSIGTLKQNNFKQSTIDSMKPRNLQSFQEDKVFKAPKEKTPITERARKSENALSNSKLNDVRSFTTVNMRTNENERTAAKLKYNGKNTNVWVADNYITDKQAKNIGEEFDNKIDPLVKEKFGEPSDVDHDGKVNILVYDIKDDFETTGSYTGGYFHPRDLYDVPHSNKAEVFYMDTYPSMGTDKNNLNEKKVYSTLAHEYQHMVNANQKLLKEQKEDGMDVWLDEAFAMASEHMYLQKPLDHRIEYYNNSTSIANGHSLIKWNHRGDVLSNYALSYLFSQYLSAQSDNGDKIFKEILQDPANTSEALENAIHKHVDPKMSLGEFMTNFRVALEKKEATGLHGFNGAPGLNSISPKPVRELPQTLAPQGSVMFETTSPIKVPKDKDEKVNYVKVK</sequence>